<name>PYRE_NEIG2</name>
<proteinExistence type="inferred from homology"/>
<dbReference type="EC" id="2.4.2.10" evidence="1"/>
<dbReference type="EMBL" id="CP001050">
    <property type="protein sequence ID" value="ACF28740.1"/>
    <property type="molecule type" value="Genomic_DNA"/>
</dbReference>
<dbReference type="RefSeq" id="WP_003692477.1">
    <property type="nucleotide sequence ID" value="NC_011035.1"/>
</dbReference>
<dbReference type="SMR" id="B4RNV9"/>
<dbReference type="KEGG" id="ngk:NGK_0037"/>
<dbReference type="HOGENOM" id="CLU_074878_0_1_4"/>
<dbReference type="UniPathway" id="UPA00070">
    <property type="reaction ID" value="UER00119"/>
</dbReference>
<dbReference type="Proteomes" id="UP000002564">
    <property type="component" value="Chromosome"/>
</dbReference>
<dbReference type="GO" id="GO:0005737">
    <property type="term" value="C:cytoplasm"/>
    <property type="evidence" value="ECO:0007669"/>
    <property type="project" value="TreeGrafter"/>
</dbReference>
<dbReference type="GO" id="GO:0000287">
    <property type="term" value="F:magnesium ion binding"/>
    <property type="evidence" value="ECO:0007669"/>
    <property type="project" value="UniProtKB-UniRule"/>
</dbReference>
<dbReference type="GO" id="GO:0004588">
    <property type="term" value="F:orotate phosphoribosyltransferase activity"/>
    <property type="evidence" value="ECO:0007669"/>
    <property type="project" value="UniProtKB-UniRule"/>
</dbReference>
<dbReference type="GO" id="GO:0006207">
    <property type="term" value="P:'de novo' pyrimidine nucleobase biosynthetic process"/>
    <property type="evidence" value="ECO:0007669"/>
    <property type="project" value="TreeGrafter"/>
</dbReference>
<dbReference type="GO" id="GO:0044205">
    <property type="term" value="P:'de novo' UMP biosynthetic process"/>
    <property type="evidence" value="ECO:0007669"/>
    <property type="project" value="UniProtKB-UniRule"/>
</dbReference>
<dbReference type="GO" id="GO:0046132">
    <property type="term" value="P:pyrimidine ribonucleoside biosynthetic process"/>
    <property type="evidence" value="ECO:0007669"/>
    <property type="project" value="TreeGrafter"/>
</dbReference>
<dbReference type="CDD" id="cd06223">
    <property type="entry name" value="PRTases_typeI"/>
    <property type="match status" value="1"/>
</dbReference>
<dbReference type="FunFam" id="3.40.50.2020:FF:000008">
    <property type="entry name" value="Orotate phosphoribosyltransferase"/>
    <property type="match status" value="1"/>
</dbReference>
<dbReference type="Gene3D" id="3.40.50.2020">
    <property type="match status" value="1"/>
</dbReference>
<dbReference type="HAMAP" id="MF_01208">
    <property type="entry name" value="PyrE"/>
    <property type="match status" value="1"/>
</dbReference>
<dbReference type="InterPro" id="IPR023031">
    <property type="entry name" value="OPRT"/>
</dbReference>
<dbReference type="InterPro" id="IPR004467">
    <property type="entry name" value="Or_phspho_trans_dom"/>
</dbReference>
<dbReference type="InterPro" id="IPR000836">
    <property type="entry name" value="PRibTrfase_dom"/>
</dbReference>
<dbReference type="InterPro" id="IPR029057">
    <property type="entry name" value="PRTase-like"/>
</dbReference>
<dbReference type="NCBIfam" id="TIGR00336">
    <property type="entry name" value="pyrE"/>
    <property type="match status" value="1"/>
</dbReference>
<dbReference type="PANTHER" id="PTHR46683">
    <property type="entry name" value="OROTATE PHOSPHORIBOSYLTRANSFERASE 1-RELATED"/>
    <property type="match status" value="1"/>
</dbReference>
<dbReference type="PANTHER" id="PTHR46683:SF1">
    <property type="entry name" value="OROTATE PHOSPHORIBOSYLTRANSFERASE 1-RELATED"/>
    <property type="match status" value="1"/>
</dbReference>
<dbReference type="Pfam" id="PF00156">
    <property type="entry name" value="Pribosyltran"/>
    <property type="match status" value="1"/>
</dbReference>
<dbReference type="SUPFAM" id="SSF53271">
    <property type="entry name" value="PRTase-like"/>
    <property type="match status" value="1"/>
</dbReference>
<dbReference type="PROSITE" id="PS00103">
    <property type="entry name" value="PUR_PYR_PR_TRANSFER"/>
    <property type="match status" value="1"/>
</dbReference>
<gene>
    <name evidence="1" type="primary">pyrE</name>
    <name type="ordered locus">NGK_0037</name>
</gene>
<keyword id="KW-0328">Glycosyltransferase</keyword>
<keyword id="KW-0460">Magnesium</keyword>
<keyword id="KW-0665">Pyrimidine biosynthesis</keyword>
<keyword id="KW-0808">Transferase</keyword>
<organism>
    <name type="scientific">Neisseria gonorrhoeae (strain NCCP11945)</name>
    <dbReference type="NCBI Taxonomy" id="521006"/>
    <lineage>
        <taxon>Bacteria</taxon>
        <taxon>Pseudomonadati</taxon>
        <taxon>Pseudomonadota</taxon>
        <taxon>Betaproteobacteria</taxon>
        <taxon>Neisseriales</taxon>
        <taxon>Neisseriaceae</taxon>
        <taxon>Neisseria</taxon>
    </lineage>
</organism>
<evidence type="ECO:0000255" key="1">
    <source>
        <dbReference type="HAMAP-Rule" id="MF_01208"/>
    </source>
</evidence>
<feature type="chain" id="PRO_1000138808" description="Orotate phosphoribosyltransferase">
    <location>
        <begin position="1"/>
        <end position="213"/>
    </location>
</feature>
<feature type="binding site" description="in other chain" evidence="1">
    <location>
        <position position="26"/>
    </location>
    <ligand>
        <name>5-phospho-alpha-D-ribose 1-diphosphate</name>
        <dbReference type="ChEBI" id="CHEBI:58017"/>
        <note>ligand shared between dimeric partners</note>
    </ligand>
</feature>
<feature type="binding site" evidence="1">
    <location>
        <begin position="34"/>
        <end position="35"/>
    </location>
    <ligand>
        <name>orotate</name>
        <dbReference type="ChEBI" id="CHEBI:30839"/>
    </ligand>
</feature>
<feature type="binding site" description="in other chain" evidence="1">
    <location>
        <begin position="72"/>
        <end position="73"/>
    </location>
    <ligand>
        <name>5-phospho-alpha-D-ribose 1-diphosphate</name>
        <dbReference type="ChEBI" id="CHEBI:58017"/>
        <note>ligand shared between dimeric partners</note>
    </ligand>
</feature>
<feature type="binding site" evidence="1">
    <location>
        <position position="98"/>
    </location>
    <ligand>
        <name>5-phospho-alpha-D-ribose 1-diphosphate</name>
        <dbReference type="ChEBI" id="CHEBI:58017"/>
        <note>ligand shared between dimeric partners</note>
    </ligand>
</feature>
<feature type="binding site" description="in other chain" evidence="1">
    <location>
        <position position="99"/>
    </location>
    <ligand>
        <name>5-phospho-alpha-D-ribose 1-diphosphate</name>
        <dbReference type="ChEBI" id="CHEBI:58017"/>
        <note>ligand shared between dimeric partners</note>
    </ligand>
</feature>
<feature type="binding site" evidence="1">
    <location>
        <position position="102"/>
    </location>
    <ligand>
        <name>5-phospho-alpha-D-ribose 1-diphosphate</name>
        <dbReference type="ChEBI" id="CHEBI:58017"/>
        <note>ligand shared between dimeric partners</note>
    </ligand>
</feature>
<feature type="binding site" description="in other chain" evidence="1">
    <location>
        <begin position="123"/>
        <end position="131"/>
    </location>
    <ligand>
        <name>5-phospho-alpha-D-ribose 1-diphosphate</name>
        <dbReference type="ChEBI" id="CHEBI:58017"/>
        <note>ligand shared between dimeric partners</note>
    </ligand>
</feature>
<feature type="binding site" evidence="1">
    <location>
        <position position="127"/>
    </location>
    <ligand>
        <name>orotate</name>
        <dbReference type="ChEBI" id="CHEBI:30839"/>
    </ligand>
</feature>
<feature type="binding site" evidence="1">
    <location>
        <position position="155"/>
    </location>
    <ligand>
        <name>orotate</name>
        <dbReference type="ChEBI" id="CHEBI:30839"/>
    </ligand>
</feature>
<reference key="1">
    <citation type="journal article" date="2008" name="J. Bacteriol.">
        <title>Complete genome sequence of Neisseria gonorrhoeae NCCP11945.</title>
        <authorList>
            <person name="Chung G.T."/>
            <person name="Yoo J.S."/>
            <person name="Oh H.B."/>
            <person name="Lee Y.S."/>
            <person name="Cha S.H."/>
            <person name="Kim S.J."/>
            <person name="Yoo C.K."/>
        </authorList>
    </citation>
    <scope>NUCLEOTIDE SEQUENCE [LARGE SCALE GENOMIC DNA]</scope>
    <source>
        <strain>NCCP11945</strain>
    </source>
</reference>
<accession>B4RNV9</accession>
<protein>
    <recommendedName>
        <fullName evidence="1">Orotate phosphoribosyltransferase</fullName>
        <shortName evidence="1">OPRT</shortName>
        <shortName evidence="1">OPRTase</shortName>
        <ecNumber evidence="1">2.4.2.10</ecNumber>
    </recommendedName>
</protein>
<comment type="function">
    <text evidence="1">Catalyzes the transfer of a ribosyl phosphate group from 5-phosphoribose 1-diphosphate to orotate, leading to the formation of orotidine monophosphate (OMP).</text>
</comment>
<comment type="catalytic activity">
    <reaction evidence="1">
        <text>orotidine 5'-phosphate + diphosphate = orotate + 5-phospho-alpha-D-ribose 1-diphosphate</text>
        <dbReference type="Rhea" id="RHEA:10380"/>
        <dbReference type="ChEBI" id="CHEBI:30839"/>
        <dbReference type="ChEBI" id="CHEBI:33019"/>
        <dbReference type="ChEBI" id="CHEBI:57538"/>
        <dbReference type="ChEBI" id="CHEBI:58017"/>
        <dbReference type="EC" id="2.4.2.10"/>
    </reaction>
</comment>
<comment type="cofactor">
    <cofactor evidence="1">
        <name>Mg(2+)</name>
        <dbReference type="ChEBI" id="CHEBI:18420"/>
    </cofactor>
</comment>
<comment type="pathway">
    <text evidence="1">Pyrimidine metabolism; UMP biosynthesis via de novo pathway; UMP from orotate: step 1/2.</text>
</comment>
<comment type="subunit">
    <text evidence="1">Homodimer.</text>
</comment>
<comment type="similarity">
    <text evidence="1">Belongs to the purine/pyrimidine phosphoribosyltransferase family. PyrE subfamily.</text>
</comment>
<sequence>MTDFRQDFLKFSLAQNVLKFGEFTTKAGRRSPYFFNAGLFNDGASTLQLAKFYAQSIIESGIRFDMLFGPAYKGIILAAATAMMLAEKGVNVPFAYNRKEAKDRGEGGVLVGAPLKGRVLIIDDVISAGTSVRESIKLIEAEGATPAGVAIALDRMEKGTGELSAVQEVEKQYGLPVAPIASLNDLFILLQNNPEFGQFLEPVRTYRRQYGVE</sequence>